<sequence>MAKPLKQQKIAVLLGGTSAEREVSLNSGNAVLTALRNQGFDAHPIDPKEYPVAMLKEQGFDRVFNILHGRGGEDGTIQGLLEQIGLPYTGCGVMASALTMDKMRTKMLWKAFGLPVADMEVVTRTSFSQLNPQVVVEKLGLPLMVKPSLEGSSVGLTKVNAIDDLKSAVEFALQYDETVLIEEWLSGDELTVPVLGNEVLPSIKIVPQGEFYDYEAKYIADNTQYFCPSGLTEEREQELRQLVKQAYDVVGCRGWSRIDVMLDGEGKFRLVEVNTNPGMTSHSLFPKSAATVGYSFEQLVVKILELSL</sequence>
<protein>
    <recommendedName>
        <fullName evidence="2">D-alanine--D-alanine ligase</fullName>
        <ecNumber evidence="2">6.3.2.4</ecNumber>
    </recommendedName>
    <alternativeName>
        <fullName evidence="2">D-Ala-D-Ala ligase</fullName>
    </alternativeName>
    <alternativeName>
        <fullName evidence="2">D-alanylalanine synthetase</fullName>
    </alternativeName>
</protein>
<keyword id="KW-0067">ATP-binding</keyword>
<keyword id="KW-0133">Cell shape</keyword>
<keyword id="KW-0961">Cell wall biogenesis/degradation</keyword>
<keyword id="KW-0963">Cytoplasm</keyword>
<keyword id="KW-0436">Ligase</keyword>
<keyword id="KW-0460">Magnesium</keyword>
<keyword id="KW-0464">Manganese</keyword>
<keyword id="KW-0479">Metal-binding</keyword>
<keyword id="KW-0547">Nucleotide-binding</keyword>
<keyword id="KW-0573">Peptidoglycan synthesis</keyword>
<feature type="chain" id="PRO_0000341106" description="D-alanine--D-alanine ligase">
    <location>
        <begin position="1"/>
        <end position="308"/>
    </location>
</feature>
<feature type="domain" description="ATP-grasp" evidence="2">
    <location>
        <begin position="106"/>
        <end position="305"/>
    </location>
</feature>
<feature type="binding site" evidence="2">
    <location>
        <begin position="136"/>
        <end position="191"/>
    </location>
    <ligand>
        <name>ATP</name>
        <dbReference type="ChEBI" id="CHEBI:30616"/>
    </ligand>
</feature>
<feature type="binding site" evidence="2">
    <location>
        <position position="259"/>
    </location>
    <ligand>
        <name>Mg(2+)</name>
        <dbReference type="ChEBI" id="CHEBI:18420"/>
        <label>1</label>
    </ligand>
</feature>
<feature type="binding site" evidence="2">
    <location>
        <position position="272"/>
    </location>
    <ligand>
        <name>Mg(2+)</name>
        <dbReference type="ChEBI" id="CHEBI:18420"/>
        <label>1</label>
    </ligand>
</feature>
<feature type="binding site" evidence="2">
    <location>
        <position position="272"/>
    </location>
    <ligand>
        <name>Mg(2+)</name>
        <dbReference type="ChEBI" id="CHEBI:18420"/>
        <label>2</label>
    </ligand>
</feature>
<feature type="binding site" evidence="2">
    <location>
        <position position="274"/>
    </location>
    <ligand>
        <name>Mg(2+)</name>
        <dbReference type="ChEBI" id="CHEBI:18420"/>
        <label>2</label>
    </ligand>
</feature>
<dbReference type="EC" id="6.3.2.4" evidence="2"/>
<dbReference type="EMBL" id="CP000947">
    <property type="protein sequence ID" value="ACA32286.1"/>
    <property type="molecule type" value="Genomic_DNA"/>
</dbReference>
<dbReference type="RefSeq" id="WP_012341455.1">
    <property type="nucleotide sequence ID" value="NC_010519.1"/>
</dbReference>
<dbReference type="SMR" id="B0US69"/>
<dbReference type="STRING" id="228400.HSM_0630"/>
<dbReference type="GeneID" id="31486911"/>
<dbReference type="KEGG" id="hsm:HSM_0630"/>
<dbReference type="HOGENOM" id="CLU_039268_1_2_6"/>
<dbReference type="UniPathway" id="UPA00219"/>
<dbReference type="GO" id="GO:0005829">
    <property type="term" value="C:cytosol"/>
    <property type="evidence" value="ECO:0007669"/>
    <property type="project" value="TreeGrafter"/>
</dbReference>
<dbReference type="GO" id="GO:0005524">
    <property type="term" value="F:ATP binding"/>
    <property type="evidence" value="ECO:0007669"/>
    <property type="project" value="UniProtKB-KW"/>
</dbReference>
<dbReference type="GO" id="GO:0008716">
    <property type="term" value="F:D-alanine-D-alanine ligase activity"/>
    <property type="evidence" value="ECO:0007669"/>
    <property type="project" value="UniProtKB-UniRule"/>
</dbReference>
<dbReference type="GO" id="GO:0046872">
    <property type="term" value="F:metal ion binding"/>
    <property type="evidence" value="ECO:0007669"/>
    <property type="project" value="UniProtKB-KW"/>
</dbReference>
<dbReference type="GO" id="GO:0071555">
    <property type="term" value="P:cell wall organization"/>
    <property type="evidence" value="ECO:0007669"/>
    <property type="project" value="UniProtKB-KW"/>
</dbReference>
<dbReference type="GO" id="GO:0009252">
    <property type="term" value="P:peptidoglycan biosynthetic process"/>
    <property type="evidence" value="ECO:0007669"/>
    <property type="project" value="UniProtKB-UniRule"/>
</dbReference>
<dbReference type="GO" id="GO:0008360">
    <property type="term" value="P:regulation of cell shape"/>
    <property type="evidence" value="ECO:0007669"/>
    <property type="project" value="UniProtKB-KW"/>
</dbReference>
<dbReference type="FunFam" id="3.30.1490.20:FF:000007">
    <property type="entry name" value="D-alanine--D-alanine ligase"/>
    <property type="match status" value="1"/>
</dbReference>
<dbReference type="FunFam" id="3.30.470.20:FF:000008">
    <property type="entry name" value="D-alanine--D-alanine ligase"/>
    <property type="match status" value="1"/>
</dbReference>
<dbReference type="FunFam" id="3.40.50.20:FF:000013">
    <property type="entry name" value="D-alanine--D-alanine ligase"/>
    <property type="match status" value="1"/>
</dbReference>
<dbReference type="Gene3D" id="3.40.50.20">
    <property type="match status" value="1"/>
</dbReference>
<dbReference type="Gene3D" id="3.30.1490.20">
    <property type="entry name" value="ATP-grasp fold, A domain"/>
    <property type="match status" value="1"/>
</dbReference>
<dbReference type="Gene3D" id="3.30.470.20">
    <property type="entry name" value="ATP-grasp fold, B domain"/>
    <property type="match status" value="1"/>
</dbReference>
<dbReference type="HAMAP" id="MF_00047">
    <property type="entry name" value="Dala_Dala_lig"/>
    <property type="match status" value="1"/>
</dbReference>
<dbReference type="InterPro" id="IPR011761">
    <property type="entry name" value="ATP-grasp"/>
</dbReference>
<dbReference type="InterPro" id="IPR013815">
    <property type="entry name" value="ATP_grasp_subdomain_1"/>
</dbReference>
<dbReference type="InterPro" id="IPR000291">
    <property type="entry name" value="D-Ala_lig_Van_CS"/>
</dbReference>
<dbReference type="InterPro" id="IPR005905">
    <property type="entry name" value="D_ala_D_ala"/>
</dbReference>
<dbReference type="InterPro" id="IPR011095">
    <property type="entry name" value="Dala_Dala_lig_C"/>
</dbReference>
<dbReference type="InterPro" id="IPR011127">
    <property type="entry name" value="Dala_Dala_lig_N"/>
</dbReference>
<dbReference type="InterPro" id="IPR016185">
    <property type="entry name" value="PreATP-grasp_dom_sf"/>
</dbReference>
<dbReference type="NCBIfam" id="TIGR01205">
    <property type="entry name" value="D_ala_D_alaTIGR"/>
    <property type="match status" value="1"/>
</dbReference>
<dbReference type="NCBIfam" id="NF002378">
    <property type="entry name" value="PRK01372.1"/>
    <property type="match status" value="1"/>
</dbReference>
<dbReference type="PANTHER" id="PTHR23132">
    <property type="entry name" value="D-ALANINE--D-ALANINE LIGASE"/>
    <property type="match status" value="1"/>
</dbReference>
<dbReference type="PANTHER" id="PTHR23132:SF23">
    <property type="entry name" value="D-ALANINE--D-ALANINE LIGASE B"/>
    <property type="match status" value="1"/>
</dbReference>
<dbReference type="Pfam" id="PF07478">
    <property type="entry name" value="Dala_Dala_lig_C"/>
    <property type="match status" value="1"/>
</dbReference>
<dbReference type="Pfam" id="PF01820">
    <property type="entry name" value="Dala_Dala_lig_N"/>
    <property type="match status" value="1"/>
</dbReference>
<dbReference type="PIRSF" id="PIRSF039102">
    <property type="entry name" value="Ddl/VanB"/>
    <property type="match status" value="1"/>
</dbReference>
<dbReference type="SUPFAM" id="SSF56059">
    <property type="entry name" value="Glutathione synthetase ATP-binding domain-like"/>
    <property type="match status" value="1"/>
</dbReference>
<dbReference type="SUPFAM" id="SSF52440">
    <property type="entry name" value="PreATP-grasp domain"/>
    <property type="match status" value="1"/>
</dbReference>
<dbReference type="PROSITE" id="PS50975">
    <property type="entry name" value="ATP_GRASP"/>
    <property type="match status" value="1"/>
</dbReference>
<dbReference type="PROSITE" id="PS00843">
    <property type="entry name" value="DALA_DALA_LIGASE_1"/>
    <property type="match status" value="1"/>
</dbReference>
<dbReference type="PROSITE" id="PS00844">
    <property type="entry name" value="DALA_DALA_LIGASE_2"/>
    <property type="match status" value="1"/>
</dbReference>
<accession>B0US69</accession>
<evidence type="ECO:0000250" key="1"/>
<evidence type="ECO:0000255" key="2">
    <source>
        <dbReference type="HAMAP-Rule" id="MF_00047"/>
    </source>
</evidence>
<proteinExistence type="inferred from homology"/>
<reference key="1">
    <citation type="submission" date="2008-02" db="EMBL/GenBank/DDBJ databases">
        <title>Complete sequence of Haemophilus somnus 2336.</title>
        <authorList>
            <consortium name="US DOE Joint Genome Institute"/>
            <person name="Siddaramappa S."/>
            <person name="Duncan A.J."/>
            <person name="Challacombe J.F."/>
            <person name="Rainey D."/>
            <person name="Gillaspy A.F."/>
            <person name="Carson M."/>
            <person name="Gipson J."/>
            <person name="Gipson M."/>
            <person name="Bruce D."/>
            <person name="Detter J.C."/>
            <person name="Han C.S."/>
            <person name="Land M."/>
            <person name="Tapia R."/>
            <person name="Thompson L.S."/>
            <person name="Orvis J."/>
            <person name="Zaitshik J."/>
            <person name="Barnes G."/>
            <person name="Brettin T.S."/>
            <person name="Dyer D.W."/>
            <person name="Inzana T.J."/>
        </authorList>
    </citation>
    <scope>NUCLEOTIDE SEQUENCE [LARGE SCALE GENOMIC DNA]</scope>
    <source>
        <strain>2336</strain>
    </source>
</reference>
<comment type="function">
    <text evidence="2">Cell wall formation.</text>
</comment>
<comment type="catalytic activity">
    <reaction evidence="2">
        <text>2 D-alanine + ATP = D-alanyl-D-alanine + ADP + phosphate + H(+)</text>
        <dbReference type="Rhea" id="RHEA:11224"/>
        <dbReference type="ChEBI" id="CHEBI:15378"/>
        <dbReference type="ChEBI" id="CHEBI:30616"/>
        <dbReference type="ChEBI" id="CHEBI:43474"/>
        <dbReference type="ChEBI" id="CHEBI:57416"/>
        <dbReference type="ChEBI" id="CHEBI:57822"/>
        <dbReference type="ChEBI" id="CHEBI:456216"/>
        <dbReference type="EC" id="6.3.2.4"/>
    </reaction>
</comment>
<comment type="cofactor">
    <cofactor evidence="1">
        <name>Mg(2+)</name>
        <dbReference type="ChEBI" id="CHEBI:18420"/>
    </cofactor>
    <cofactor evidence="1">
        <name>Mn(2+)</name>
        <dbReference type="ChEBI" id="CHEBI:29035"/>
    </cofactor>
    <text evidence="1">Binds 2 magnesium or manganese ions per subunit.</text>
</comment>
<comment type="pathway">
    <text evidence="2">Cell wall biogenesis; peptidoglycan biosynthesis.</text>
</comment>
<comment type="subcellular location">
    <subcellularLocation>
        <location evidence="2">Cytoplasm</location>
    </subcellularLocation>
</comment>
<comment type="similarity">
    <text evidence="2">Belongs to the D-alanine--D-alanine ligase family.</text>
</comment>
<gene>
    <name evidence="2" type="primary">ddl</name>
    <name type="ordered locus">HSM_0630</name>
</gene>
<organism>
    <name type="scientific">Histophilus somni (strain 2336)</name>
    <name type="common">Haemophilus somnus</name>
    <dbReference type="NCBI Taxonomy" id="228400"/>
    <lineage>
        <taxon>Bacteria</taxon>
        <taxon>Pseudomonadati</taxon>
        <taxon>Pseudomonadota</taxon>
        <taxon>Gammaproteobacteria</taxon>
        <taxon>Pasteurellales</taxon>
        <taxon>Pasteurellaceae</taxon>
        <taxon>Histophilus</taxon>
    </lineage>
</organism>
<name>DDL_HISS2</name>